<proteinExistence type="inferred from homology"/>
<keyword id="KW-0472">Membrane</keyword>
<keyword id="KW-0597">Phosphoprotein</keyword>
<organism>
    <name type="scientific">Saccharomyces cerevisiae (strain Lalvin EC1118 / Prise de mousse)</name>
    <name type="common">Baker's yeast</name>
    <dbReference type="NCBI Taxonomy" id="643680"/>
    <lineage>
        <taxon>Eukaryota</taxon>
        <taxon>Fungi</taxon>
        <taxon>Dikarya</taxon>
        <taxon>Ascomycota</taxon>
        <taxon>Saccharomycotina</taxon>
        <taxon>Saccharomycetes</taxon>
        <taxon>Saccharomycetales</taxon>
        <taxon>Saccharomycetaceae</taxon>
        <taxon>Saccharomyces</taxon>
    </lineage>
</organism>
<feature type="chain" id="PRO_0000399604" description="Altered inheritance of mitochondria protein 3">
    <location>
        <begin position="1"/>
        <end position="946"/>
    </location>
</feature>
<feature type="region of interest" description="Disordered" evidence="3">
    <location>
        <begin position="1"/>
        <end position="333"/>
    </location>
</feature>
<feature type="region of interest" description="Disordered" evidence="3">
    <location>
        <begin position="351"/>
        <end position="903"/>
    </location>
</feature>
<feature type="compositionally biased region" description="Basic residues" evidence="3">
    <location>
        <begin position="36"/>
        <end position="54"/>
    </location>
</feature>
<feature type="compositionally biased region" description="Acidic residues" evidence="3">
    <location>
        <begin position="59"/>
        <end position="68"/>
    </location>
</feature>
<feature type="compositionally biased region" description="Basic and acidic residues" evidence="3">
    <location>
        <begin position="69"/>
        <end position="84"/>
    </location>
</feature>
<feature type="compositionally biased region" description="Low complexity" evidence="3">
    <location>
        <begin position="93"/>
        <end position="105"/>
    </location>
</feature>
<feature type="compositionally biased region" description="Low complexity" evidence="3">
    <location>
        <begin position="130"/>
        <end position="158"/>
    </location>
</feature>
<feature type="compositionally biased region" description="Polar residues" evidence="3">
    <location>
        <begin position="166"/>
        <end position="244"/>
    </location>
</feature>
<feature type="compositionally biased region" description="Low complexity" evidence="3">
    <location>
        <begin position="245"/>
        <end position="267"/>
    </location>
</feature>
<feature type="compositionally biased region" description="Low complexity" evidence="3">
    <location>
        <begin position="306"/>
        <end position="320"/>
    </location>
</feature>
<feature type="compositionally biased region" description="Polar residues" evidence="3">
    <location>
        <begin position="351"/>
        <end position="364"/>
    </location>
</feature>
<feature type="compositionally biased region" description="Pro residues" evidence="3">
    <location>
        <begin position="376"/>
        <end position="392"/>
    </location>
</feature>
<feature type="compositionally biased region" description="Polar residues" evidence="3">
    <location>
        <begin position="463"/>
        <end position="472"/>
    </location>
</feature>
<feature type="compositionally biased region" description="Basic and acidic residues" evidence="3">
    <location>
        <begin position="485"/>
        <end position="499"/>
    </location>
</feature>
<feature type="compositionally biased region" description="Basic and acidic residues" evidence="3">
    <location>
        <begin position="523"/>
        <end position="538"/>
    </location>
</feature>
<feature type="compositionally biased region" description="Basic and acidic residues" evidence="3">
    <location>
        <begin position="608"/>
        <end position="625"/>
    </location>
</feature>
<feature type="compositionally biased region" description="Low complexity" evidence="3">
    <location>
        <begin position="627"/>
        <end position="642"/>
    </location>
</feature>
<feature type="compositionally biased region" description="Low complexity" evidence="3">
    <location>
        <begin position="666"/>
        <end position="675"/>
    </location>
</feature>
<feature type="compositionally biased region" description="Basic and acidic residues" evidence="3">
    <location>
        <begin position="748"/>
        <end position="758"/>
    </location>
</feature>
<feature type="compositionally biased region" description="Polar residues" evidence="3">
    <location>
        <begin position="762"/>
        <end position="773"/>
    </location>
</feature>
<feature type="compositionally biased region" description="Pro residues" evidence="3">
    <location>
        <begin position="861"/>
        <end position="878"/>
    </location>
</feature>
<feature type="compositionally biased region" description="Basic residues" evidence="3">
    <location>
        <begin position="887"/>
        <end position="898"/>
    </location>
</feature>
<feature type="modified residue" description="Phosphoserine" evidence="2">
    <location>
        <position position="57"/>
    </location>
</feature>
<feature type="modified residue" description="Phosphoserine" evidence="2">
    <location>
        <position position="58"/>
    </location>
</feature>
<feature type="modified residue" description="Phosphoserine" evidence="2">
    <location>
        <position position="64"/>
    </location>
</feature>
<feature type="modified residue" description="Phosphoserine" evidence="2">
    <location>
        <position position="473"/>
    </location>
</feature>
<feature type="modified residue" description="Phosphothreonine" evidence="2">
    <location>
        <position position="728"/>
    </location>
</feature>
<feature type="modified residue" description="Phosphothreonine" evidence="2">
    <location>
        <position position="860"/>
    </location>
</feature>
<gene>
    <name type="primary">AIM3</name>
    <name type="ORF">EC1118_1B15_2542g</name>
</gene>
<dbReference type="EMBL" id="FN393060">
    <property type="protein sequence ID" value="CBK39181.1"/>
    <property type="molecule type" value="Genomic_DNA"/>
</dbReference>
<dbReference type="HOGENOM" id="CLU_324433_0_0_1"/>
<dbReference type="OrthoDB" id="41995at4893"/>
<dbReference type="Proteomes" id="UP000000286">
    <property type="component" value="Chromosome II, Scaffold EC1118_1B15"/>
</dbReference>
<dbReference type="GO" id="GO:0030479">
    <property type="term" value="C:actin cortical patch"/>
    <property type="evidence" value="ECO:0007669"/>
    <property type="project" value="InterPro"/>
</dbReference>
<dbReference type="GO" id="GO:0045121">
    <property type="term" value="C:membrane raft"/>
    <property type="evidence" value="ECO:0007669"/>
    <property type="project" value="UniProtKB-SubCell"/>
</dbReference>
<dbReference type="GO" id="GO:0051016">
    <property type="term" value="P:barbed-end actin filament capping"/>
    <property type="evidence" value="ECO:0007669"/>
    <property type="project" value="InterPro"/>
</dbReference>
<dbReference type="InterPro" id="IPR031370">
    <property type="entry name" value="Aim3"/>
</dbReference>
<dbReference type="Pfam" id="PF17096">
    <property type="entry name" value="AIM3"/>
    <property type="match status" value="1"/>
</dbReference>
<accession>D3UEK1</accession>
<evidence type="ECO:0000250" key="1"/>
<evidence type="ECO:0000250" key="2">
    <source>
        <dbReference type="UniProtKB" id="P38266"/>
    </source>
</evidence>
<evidence type="ECO:0000256" key="3">
    <source>
        <dbReference type="SAM" id="MobiDB-lite"/>
    </source>
</evidence>
<evidence type="ECO:0000305" key="4"/>
<comment type="subunit">
    <text evidence="1">Interacts with RVS167.</text>
</comment>
<comment type="subcellular location">
    <subcellularLocation>
        <location evidence="1">Membrane raft</location>
        <topology evidence="1">Peripheral membrane protein</topology>
    </subcellularLocation>
    <text evidence="1">Localizes within detergent-insoluble glycolipid-enriched membranes.</text>
</comment>
<comment type="similarity">
    <text evidence="4">Belongs to the AIM3 family.</text>
</comment>
<sequence>MGFWENNKDSITSGLKSAGKYGYQGTKYVAKTGYKASKKHYNNSKARRERKSGKKNSSDEEYESEDEMEHERKPTDIRSLKDPKSFPPPPLKPGQKTYTGQQQQQMPNGQASYAFQGAYQGQPGAGSMEQSQYAQPQYNQYPQQQLQQGVVPQQPPIYGEQVPPYGSNSNATSYQSLSQQNQPQYAIPSQVSLNSASQQSTGFVSQNLQYGTQSSNPAPSPSFQNGLQCHQQPQYVSHGSTNLGQSQFPSGQQQQPTTQFGQQVLPSPAQPHPQPQQQQQGQPLPPPRGQVILPAPGEPLSNGFGQQQQQQQQQQQQQQQPLNQNNALLPQMNVEGVSGMAAVQPVYGQAMSSTTNMQDSNPSYGASPMQGQPPVGGQPPVPVRMQPQPPQPMQQGNIYPIEPSLDSTSSTPHFEVTPFDPDAPAPKPKIDIPTVDVSSLPPPPTHRDRGAVLHQEPAPSGKIQPNTTSSAASLPAKHSRTTTADNERNSGNKENDESTSKSSILGHYDVDVNIMPPPKPFRHGLDSVPSEHTRKNASERAVPILPPRNNVEPPPPPSRGNFERTESVLSTNAANVQEDPISNFLPPPKPFRHTETKQNQNSKASPVEIKDEVLPGHPSEEDRNVEPSLLPQSKPQSQSQSQFRRAHMETQPIQNFQPPPKPFRRSQSSNSSDSSYTIDGPEANHGRGRGRIAKHHDGDEYNPKSENSTENGRLGDAPNSFIRKRAPTPPAPSRSEKLHEGAITSEVDSSKDANKYEKSIPPVTSSIQAQQSTKKAPPPVVKPKPRNFSLKANEYPKELTREATGQDEVLNSITNELSHIKLRKTNVNLEKLGGSKKVKDSSPVPSDLDEKYVSASGSITPPRPPPSRSSPKKVPPVVPKKNDNLKKKPPVVPKKKPLLKSLEPRPIEMERAYSGDISAADDNLNPFERYKRNVVPQEDDRLHKLK</sequence>
<name>AIM3_YEAS8</name>
<reference key="1">
    <citation type="journal article" date="2009" name="Proc. Natl. Acad. Sci. U.S.A.">
        <title>Eukaryote-to-eukaryote gene transfer events revealed by the genome sequence of the wine yeast Saccharomyces cerevisiae EC1118.</title>
        <authorList>
            <person name="Novo M."/>
            <person name="Bigey F."/>
            <person name="Beyne E."/>
            <person name="Galeote V."/>
            <person name="Gavory F."/>
            <person name="Mallet S."/>
            <person name="Cambon B."/>
            <person name="Legras J.-L."/>
            <person name="Wincker P."/>
            <person name="Casaregola S."/>
            <person name="Dequin S."/>
        </authorList>
    </citation>
    <scope>NUCLEOTIDE SEQUENCE [LARGE SCALE GENOMIC DNA]</scope>
    <source>
        <strain>Lalvin EC1118 / Prise de mousse</strain>
    </source>
</reference>
<protein>
    <recommendedName>
        <fullName>Altered inheritance of mitochondria protein 3</fullName>
    </recommendedName>
</protein>